<comment type="catalytic activity">
    <reaction evidence="1">
        <text>(S)-malate + a quinone = a quinol + oxaloacetate</text>
        <dbReference type="Rhea" id="RHEA:46012"/>
        <dbReference type="ChEBI" id="CHEBI:15589"/>
        <dbReference type="ChEBI" id="CHEBI:16452"/>
        <dbReference type="ChEBI" id="CHEBI:24646"/>
        <dbReference type="ChEBI" id="CHEBI:132124"/>
        <dbReference type="EC" id="1.1.5.4"/>
    </reaction>
</comment>
<comment type="cofactor">
    <cofactor evidence="1">
        <name>FAD</name>
        <dbReference type="ChEBI" id="CHEBI:57692"/>
    </cofactor>
</comment>
<comment type="pathway">
    <text evidence="1">Carbohydrate metabolism; tricarboxylic acid cycle; oxaloacetate from (S)-malate (quinone route): step 1/1.</text>
</comment>
<comment type="similarity">
    <text evidence="1">Belongs to the MQO family.</text>
</comment>
<evidence type="ECO:0000255" key="1">
    <source>
        <dbReference type="HAMAP-Rule" id="MF_00212"/>
    </source>
</evidence>
<keyword id="KW-0274">FAD</keyword>
<keyword id="KW-0285">Flavoprotein</keyword>
<keyword id="KW-0560">Oxidoreductase</keyword>
<keyword id="KW-0816">Tricarboxylic acid cycle</keyword>
<feature type="chain" id="PRO_1000023812" description="Probable malate:quinone oxidoreductase">
    <location>
        <begin position="1"/>
        <end position="496"/>
    </location>
</feature>
<reference key="1">
    <citation type="journal article" date="2007" name="PLoS Genet.">
        <title>Patterns and implications of gene gain and loss in the evolution of Prochlorococcus.</title>
        <authorList>
            <person name="Kettler G.C."/>
            <person name="Martiny A.C."/>
            <person name="Huang K."/>
            <person name="Zucker J."/>
            <person name="Coleman M.L."/>
            <person name="Rodrigue S."/>
            <person name="Chen F."/>
            <person name="Lapidus A."/>
            <person name="Ferriera S."/>
            <person name="Johnson J."/>
            <person name="Steglich C."/>
            <person name="Church G.M."/>
            <person name="Richardson P."/>
            <person name="Chisholm S.W."/>
        </authorList>
    </citation>
    <scope>NUCLEOTIDE SEQUENCE [LARGE SCALE GENOMIC DNA]</scope>
    <source>
        <strain>MIT 9303</strain>
    </source>
</reference>
<proteinExistence type="inferred from homology"/>
<protein>
    <recommendedName>
        <fullName evidence="1">Probable malate:quinone oxidoreductase</fullName>
        <ecNumber evidence="1">1.1.5.4</ecNumber>
    </recommendedName>
    <alternativeName>
        <fullName evidence="1">MQO</fullName>
    </alternativeName>
    <alternativeName>
        <fullName evidence="1">Malate dehydrogenase [quinone]</fullName>
    </alternativeName>
</protein>
<accession>A2CBH2</accession>
<organism>
    <name type="scientific">Prochlorococcus marinus (strain MIT 9303)</name>
    <dbReference type="NCBI Taxonomy" id="59922"/>
    <lineage>
        <taxon>Bacteria</taxon>
        <taxon>Bacillati</taxon>
        <taxon>Cyanobacteriota</taxon>
        <taxon>Cyanophyceae</taxon>
        <taxon>Synechococcales</taxon>
        <taxon>Prochlorococcaceae</taxon>
        <taxon>Prochlorococcus</taxon>
    </lineage>
</organism>
<dbReference type="EC" id="1.1.5.4" evidence="1"/>
<dbReference type="EMBL" id="CP000554">
    <property type="protein sequence ID" value="ABM78832.1"/>
    <property type="molecule type" value="Genomic_DNA"/>
</dbReference>
<dbReference type="RefSeq" id="WP_011826709.1">
    <property type="nucleotide sequence ID" value="NC_008820.1"/>
</dbReference>
<dbReference type="SMR" id="A2CBH2"/>
<dbReference type="STRING" id="59922.P9303_20971"/>
<dbReference type="KEGG" id="pmf:P9303_20971"/>
<dbReference type="HOGENOM" id="CLU_028151_0_0_3"/>
<dbReference type="BioCyc" id="PMAR59922:G1G80-1832-MONOMER"/>
<dbReference type="UniPathway" id="UPA00223">
    <property type="reaction ID" value="UER01008"/>
</dbReference>
<dbReference type="Proteomes" id="UP000002274">
    <property type="component" value="Chromosome"/>
</dbReference>
<dbReference type="GO" id="GO:0047545">
    <property type="term" value="F:2-hydroxyglutarate dehydrogenase activity"/>
    <property type="evidence" value="ECO:0007669"/>
    <property type="project" value="TreeGrafter"/>
</dbReference>
<dbReference type="GO" id="GO:0008924">
    <property type="term" value="F:L-malate dehydrogenase (quinone) activity"/>
    <property type="evidence" value="ECO:0007669"/>
    <property type="project" value="UniProtKB-UniRule"/>
</dbReference>
<dbReference type="GO" id="GO:0006099">
    <property type="term" value="P:tricarboxylic acid cycle"/>
    <property type="evidence" value="ECO:0007669"/>
    <property type="project" value="UniProtKB-UniRule"/>
</dbReference>
<dbReference type="Gene3D" id="3.30.9.10">
    <property type="entry name" value="D-Amino Acid Oxidase, subunit A, domain 2"/>
    <property type="match status" value="1"/>
</dbReference>
<dbReference type="Gene3D" id="3.50.50.60">
    <property type="entry name" value="FAD/NAD(P)-binding domain"/>
    <property type="match status" value="1"/>
</dbReference>
<dbReference type="HAMAP" id="MF_00212">
    <property type="entry name" value="MQO"/>
    <property type="match status" value="1"/>
</dbReference>
<dbReference type="InterPro" id="IPR036188">
    <property type="entry name" value="FAD/NAD-bd_sf"/>
</dbReference>
<dbReference type="InterPro" id="IPR006231">
    <property type="entry name" value="MQO"/>
</dbReference>
<dbReference type="NCBIfam" id="TIGR01320">
    <property type="entry name" value="mal_quin_oxido"/>
    <property type="match status" value="1"/>
</dbReference>
<dbReference type="NCBIfam" id="NF003606">
    <property type="entry name" value="PRK05257.2-1"/>
    <property type="match status" value="1"/>
</dbReference>
<dbReference type="NCBIfam" id="NF003607">
    <property type="entry name" value="PRK05257.2-3"/>
    <property type="match status" value="1"/>
</dbReference>
<dbReference type="NCBIfam" id="NF003611">
    <property type="entry name" value="PRK05257.3-2"/>
    <property type="match status" value="1"/>
</dbReference>
<dbReference type="PANTHER" id="PTHR43104">
    <property type="entry name" value="L-2-HYDROXYGLUTARATE DEHYDROGENASE, MITOCHONDRIAL"/>
    <property type="match status" value="1"/>
</dbReference>
<dbReference type="PANTHER" id="PTHR43104:SF2">
    <property type="entry name" value="L-2-HYDROXYGLUTARATE DEHYDROGENASE, MITOCHONDRIAL"/>
    <property type="match status" value="1"/>
</dbReference>
<dbReference type="Pfam" id="PF06039">
    <property type="entry name" value="Mqo"/>
    <property type="match status" value="1"/>
</dbReference>
<dbReference type="SUPFAM" id="SSF51905">
    <property type="entry name" value="FAD/NAD(P)-binding domain"/>
    <property type="match status" value="1"/>
</dbReference>
<name>MQO_PROM3</name>
<sequence>MAVSDVAGSQSRYDAVLVGAGIMSATLAALLHELDPELRLLMVERLQAPGLESSAAENNAGTGHAANCELNYTPLQPDGSVATAKALAINTAFERSLEFWASLTEKGKLLPQQFLHLVPHISVVFGDADLAFLHQRFQQLSALPAFASMQWSTDAAELAEWMPLVMEGRANAESVAATCIKRGTDVDFGLLTRAYVKSLQASGALELSCGCEVVHLHRLGKHRWNLDLKHSSGSRSVQTPFVFLGAGGGALPLLQRSGIPEAAAYAGFPVSGQWLVCSEPGLTARHHAKVYGKAKVGAPPMSVPHLDSRWIDGCRSLLFGPYAGFSSKFLKQGSRLDLLRSVRRSNFRSMLEVGFKNFDLVTYLLSELQQSEKDRFETLKQFLPNAQLNDWKLSVAGQRVQIIKGTAEGGRLQMGTEVVSAEDGSLAALLGASPGASTAVTVMLEVLQRCWSERMASESWQERLQKLLPSYGHDPNSDPLLLMQMRIRSNELLSFT</sequence>
<gene>
    <name evidence="1" type="primary">mqo</name>
    <name type="ordered locus">P9303_20971</name>
</gene>